<organism>
    <name type="scientific">Ehrlichia ruminantium (strain Welgevonden)</name>
    <dbReference type="NCBI Taxonomy" id="254945"/>
    <lineage>
        <taxon>Bacteria</taxon>
        <taxon>Pseudomonadati</taxon>
        <taxon>Pseudomonadota</taxon>
        <taxon>Alphaproteobacteria</taxon>
        <taxon>Rickettsiales</taxon>
        <taxon>Anaplasmataceae</taxon>
        <taxon>Ehrlichia</taxon>
    </lineage>
</organism>
<keyword id="KW-0067">ATP-binding</keyword>
<keyword id="KW-0173">Coenzyme A biosynthesis</keyword>
<keyword id="KW-0963">Cytoplasm</keyword>
<keyword id="KW-0418">Kinase</keyword>
<keyword id="KW-0547">Nucleotide-binding</keyword>
<keyword id="KW-0808">Transferase</keyword>
<name>COAE_EHRRW</name>
<feature type="chain" id="PRO_0000243286" description="Dephospho-CoA kinase">
    <location>
        <begin position="1"/>
        <end position="201"/>
    </location>
</feature>
<feature type="domain" description="DPCK" evidence="1">
    <location>
        <begin position="3"/>
        <end position="201"/>
    </location>
</feature>
<feature type="binding site" evidence="1">
    <location>
        <begin position="11"/>
        <end position="16"/>
    </location>
    <ligand>
        <name>ATP</name>
        <dbReference type="ChEBI" id="CHEBI:30616"/>
    </ligand>
</feature>
<sequence length="201" mass="23224">MIILGLTGGIGSGKSLVASYFNRFVKAVVFDADNVVNNLYNFDNNVIELVKSYFPTSVNNGVVDKNDLKHYFLLYDDLWIKFQSELHSIVWKIQKDFILSNSRRVTKYVVLDVPLLIEANYHNCCDFVIHVKANSILQRQRLLKRGMSRHEFELISRLQLSDNDRKRLSDFTIRTGLSKNFVVSQVKDIVFQIDSRVGCKI</sequence>
<accession>Q5HBN3</accession>
<accession>Q5FE77</accession>
<gene>
    <name evidence="1" type="primary">coaE</name>
    <name type="ordered locus">Erum2960</name>
    <name type="ordered locus">ERWE_CDS_03020</name>
</gene>
<proteinExistence type="inferred from homology"/>
<dbReference type="EC" id="2.7.1.24" evidence="1"/>
<dbReference type="EMBL" id="CR767821">
    <property type="protein sequence ID" value="CAH58013.1"/>
    <property type="molecule type" value="Genomic_DNA"/>
</dbReference>
<dbReference type="EMBL" id="CR925678">
    <property type="protein sequence ID" value="CAI26796.1"/>
    <property type="molecule type" value="Genomic_DNA"/>
</dbReference>
<dbReference type="RefSeq" id="WP_011154978.1">
    <property type="nucleotide sequence ID" value="NC_005295.2"/>
</dbReference>
<dbReference type="SMR" id="Q5HBN3"/>
<dbReference type="GeneID" id="33057551"/>
<dbReference type="KEGG" id="eru:Erum2960"/>
<dbReference type="KEGG" id="erw:ERWE_CDS_03020"/>
<dbReference type="eggNOG" id="COG0237">
    <property type="taxonomic scope" value="Bacteria"/>
</dbReference>
<dbReference type="HOGENOM" id="CLU_057180_3_0_5"/>
<dbReference type="UniPathway" id="UPA00241">
    <property type="reaction ID" value="UER00356"/>
</dbReference>
<dbReference type="Proteomes" id="UP000001021">
    <property type="component" value="Chromosome"/>
</dbReference>
<dbReference type="GO" id="GO:0005737">
    <property type="term" value="C:cytoplasm"/>
    <property type="evidence" value="ECO:0007669"/>
    <property type="project" value="UniProtKB-SubCell"/>
</dbReference>
<dbReference type="GO" id="GO:0005524">
    <property type="term" value="F:ATP binding"/>
    <property type="evidence" value="ECO:0007669"/>
    <property type="project" value="UniProtKB-UniRule"/>
</dbReference>
<dbReference type="GO" id="GO:0004140">
    <property type="term" value="F:dephospho-CoA kinase activity"/>
    <property type="evidence" value="ECO:0007669"/>
    <property type="project" value="UniProtKB-UniRule"/>
</dbReference>
<dbReference type="GO" id="GO:0015937">
    <property type="term" value="P:coenzyme A biosynthetic process"/>
    <property type="evidence" value="ECO:0007669"/>
    <property type="project" value="UniProtKB-UniRule"/>
</dbReference>
<dbReference type="CDD" id="cd02022">
    <property type="entry name" value="DPCK"/>
    <property type="match status" value="1"/>
</dbReference>
<dbReference type="Gene3D" id="3.40.50.300">
    <property type="entry name" value="P-loop containing nucleotide triphosphate hydrolases"/>
    <property type="match status" value="1"/>
</dbReference>
<dbReference type="HAMAP" id="MF_00376">
    <property type="entry name" value="Dephospho_CoA_kinase"/>
    <property type="match status" value="1"/>
</dbReference>
<dbReference type="InterPro" id="IPR001977">
    <property type="entry name" value="Depp_CoAkinase"/>
</dbReference>
<dbReference type="InterPro" id="IPR027417">
    <property type="entry name" value="P-loop_NTPase"/>
</dbReference>
<dbReference type="NCBIfam" id="TIGR00152">
    <property type="entry name" value="dephospho-CoA kinase"/>
    <property type="match status" value="1"/>
</dbReference>
<dbReference type="PANTHER" id="PTHR10695:SF46">
    <property type="entry name" value="BIFUNCTIONAL COENZYME A SYNTHASE-RELATED"/>
    <property type="match status" value="1"/>
</dbReference>
<dbReference type="PANTHER" id="PTHR10695">
    <property type="entry name" value="DEPHOSPHO-COA KINASE-RELATED"/>
    <property type="match status" value="1"/>
</dbReference>
<dbReference type="Pfam" id="PF01121">
    <property type="entry name" value="CoaE"/>
    <property type="match status" value="1"/>
</dbReference>
<dbReference type="SUPFAM" id="SSF52540">
    <property type="entry name" value="P-loop containing nucleoside triphosphate hydrolases"/>
    <property type="match status" value="1"/>
</dbReference>
<dbReference type="PROSITE" id="PS51219">
    <property type="entry name" value="DPCK"/>
    <property type="match status" value="1"/>
</dbReference>
<evidence type="ECO:0000255" key="1">
    <source>
        <dbReference type="HAMAP-Rule" id="MF_00376"/>
    </source>
</evidence>
<reference key="1">
    <citation type="journal article" date="2005" name="Proc. Natl. Acad. Sci. U.S.A.">
        <title>The genome of the heartwater agent Ehrlichia ruminantium contains multiple tandem repeats of actively variable copy number.</title>
        <authorList>
            <person name="Collins N.E."/>
            <person name="Liebenberg J."/>
            <person name="de Villiers E.P."/>
            <person name="Brayton K.A."/>
            <person name="Louw E."/>
            <person name="Pretorius A."/>
            <person name="Faber F.E."/>
            <person name="van Heerden H."/>
            <person name="Josemans A."/>
            <person name="van Kleef M."/>
            <person name="Steyn H.C."/>
            <person name="van Strijp M.F."/>
            <person name="Zweygarth E."/>
            <person name="Jongejan F."/>
            <person name="Maillard J.C."/>
            <person name="Berthier D."/>
            <person name="Botha M."/>
            <person name="Joubert F."/>
            <person name="Corton C.H."/>
            <person name="Thomson N.R."/>
            <person name="Allsopp M.T."/>
            <person name="Allsopp B.A."/>
        </authorList>
    </citation>
    <scope>NUCLEOTIDE SEQUENCE [LARGE SCALE GENOMIC DNA]</scope>
    <source>
        <strain>Welgevonden</strain>
    </source>
</reference>
<reference key="2">
    <citation type="journal article" date="2006" name="J. Bacteriol.">
        <title>Comparative genomic analysis of three strains of Ehrlichia ruminantium reveals an active process of genome size plasticity.</title>
        <authorList>
            <person name="Frutos R."/>
            <person name="Viari A."/>
            <person name="Ferraz C."/>
            <person name="Morgat A."/>
            <person name="Eychenie S."/>
            <person name="Kandassamy Y."/>
            <person name="Chantal I."/>
            <person name="Bensaid A."/>
            <person name="Coissac E."/>
            <person name="Vachiery N."/>
            <person name="Demaille J."/>
            <person name="Martinez D."/>
        </authorList>
    </citation>
    <scope>NUCLEOTIDE SEQUENCE [LARGE SCALE GENOMIC DNA]</scope>
    <source>
        <strain>Welgevonden</strain>
    </source>
</reference>
<comment type="function">
    <text evidence="1">Catalyzes the phosphorylation of the 3'-hydroxyl group of dephosphocoenzyme A to form coenzyme A.</text>
</comment>
<comment type="catalytic activity">
    <reaction evidence="1">
        <text>3'-dephospho-CoA + ATP = ADP + CoA + H(+)</text>
        <dbReference type="Rhea" id="RHEA:18245"/>
        <dbReference type="ChEBI" id="CHEBI:15378"/>
        <dbReference type="ChEBI" id="CHEBI:30616"/>
        <dbReference type="ChEBI" id="CHEBI:57287"/>
        <dbReference type="ChEBI" id="CHEBI:57328"/>
        <dbReference type="ChEBI" id="CHEBI:456216"/>
        <dbReference type="EC" id="2.7.1.24"/>
    </reaction>
</comment>
<comment type="pathway">
    <text evidence="1">Cofactor biosynthesis; coenzyme A biosynthesis; CoA from (R)-pantothenate: step 5/5.</text>
</comment>
<comment type="subcellular location">
    <subcellularLocation>
        <location evidence="1">Cytoplasm</location>
    </subcellularLocation>
</comment>
<comment type="similarity">
    <text evidence="1">Belongs to the CoaE family.</text>
</comment>
<protein>
    <recommendedName>
        <fullName evidence="1">Dephospho-CoA kinase</fullName>
        <ecNumber evidence="1">2.7.1.24</ecNumber>
    </recommendedName>
    <alternativeName>
        <fullName evidence="1">Dephosphocoenzyme A kinase</fullName>
    </alternativeName>
</protein>